<feature type="chain" id="PRO_0000351538" description="3-hydroxy-5-phosphonooxypentane-2,4-dione thiolase">
    <location>
        <begin position="1"/>
        <end position="291"/>
    </location>
</feature>
<feature type="active site" description="Schiff-base intermediate with substrate" evidence="1">
    <location>
        <position position="203"/>
    </location>
</feature>
<proteinExistence type="inferred from homology"/>
<comment type="function">
    <text evidence="1">Involved in the degradation of phospho-AI-2, thereby terminating induction of the lsr operon and closing the AI-2 signaling cycle. Catalyzes the transfer of an acetyl moiety from 3-hydroxy-5-phosphonooxypentane-2,4-dione to CoA to form glycerone phosphate and acetyl-CoA.</text>
</comment>
<comment type="catalytic activity">
    <reaction evidence="1">
        <text>dihydroxyacetone phosphate + acetyl-CoA = 3-hydroxy-2,4-dioxopentyl phosphate + CoA</text>
        <dbReference type="Rhea" id="RHEA:44736"/>
        <dbReference type="ChEBI" id="CHEBI:57287"/>
        <dbReference type="ChEBI" id="CHEBI:57288"/>
        <dbReference type="ChEBI" id="CHEBI:57642"/>
        <dbReference type="ChEBI" id="CHEBI:84359"/>
        <dbReference type="EC" id="2.3.1.245"/>
    </reaction>
</comment>
<comment type="subunit">
    <text evidence="1">Homodecamer.</text>
</comment>
<comment type="subcellular location">
    <subcellularLocation>
        <location evidence="1">Cytoplasm</location>
    </subcellularLocation>
</comment>
<comment type="similarity">
    <text evidence="1">Belongs to the DeoC/FbaB aldolase family.</text>
</comment>
<name>LSRF_YERPN</name>
<reference key="1">
    <citation type="journal article" date="2006" name="J. Bacteriol.">
        <title>Complete genome sequence of Yersinia pestis strains Antiqua and Nepal516: evidence of gene reduction in an emerging pathogen.</title>
        <authorList>
            <person name="Chain P.S.G."/>
            <person name="Hu P."/>
            <person name="Malfatti S.A."/>
            <person name="Radnedge L."/>
            <person name="Larimer F."/>
            <person name="Vergez L.M."/>
            <person name="Worsham P."/>
            <person name="Chu M.C."/>
            <person name="Andersen G.L."/>
        </authorList>
    </citation>
    <scope>NUCLEOTIDE SEQUENCE [LARGE SCALE GENOMIC DNA]</scope>
    <source>
        <strain>Nepal516</strain>
    </source>
</reference>
<reference key="2">
    <citation type="submission" date="2009-04" db="EMBL/GenBank/DDBJ databases">
        <title>Yersinia pestis Nepal516A whole genome shotgun sequencing project.</title>
        <authorList>
            <person name="Plunkett G. III"/>
            <person name="Anderson B.D."/>
            <person name="Baumler D.J."/>
            <person name="Burland V."/>
            <person name="Cabot E.L."/>
            <person name="Glasner J.D."/>
            <person name="Mau B."/>
            <person name="Neeno-Eckwall E."/>
            <person name="Perna N.T."/>
            <person name="Munk A.C."/>
            <person name="Tapia R."/>
            <person name="Green L.D."/>
            <person name="Rogers Y.C."/>
            <person name="Detter J.C."/>
            <person name="Bruce D.C."/>
            <person name="Brettin T.S."/>
        </authorList>
    </citation>
    <scope>NUCLEOTIDE SEQUENCE [LARGE SCALE GENOMIC DNA]</scope>
    <source>
        <strain>Nepal516</strain>
    </source>
</reference>
<organism>
    <name type="scientific">Yersinia pestis bv. Antiqua (strain Nepal516)</name>
    <dbReference type="NCBI Taxonomy" id="377628"/>
    <lineage>
        <taxon>Bacteria</taxon>
        <taxon>Pseudomonadati</taxon>
        <taxon>Pseudomonadota</taxon>
        <taxon>Gammaproteobacteria</taxon>
        <taxon>Enterobacterales</taxon>
        <taxon>Yersiniaceae</taxon>
        <taxon>Yersinia</taxon>
    </lineage>
</organism>
<keyword id="KW-0963">Cytoplasm</keyword>
<keyword id="KW-0704">Schiff base</keyword>
<keyword id="KW-0808">Transferase</keyword>
<accession>Q1CN19</accession>
<accession>C4GNH8</accession>
<protein>
    <recommendedName>
        <fullName evidence="1">3-hydroxy-5-phosphonooxypentane-2,4-dione thiolase</fullName>
        <ecNumber evidence="1">2.3.1.245</ecNumber>
    </recommendedName>
</protein>
<dbReference type="EC" id="2.3.1.245" evidence="1"/>
<dbReference type="EMBL" id="CP000305">
    <property type="protein sequence ID" value="ABG16611.1"/>
    <property type="molecule type" value="Genomic_DNA"/>
</dbReference>
<dbReference type="EMBL" id="ACNQ01000006">
    <property type="protein sequence ID" value="EEO78060.1"/>
    <property type="molecule type" value="Genomic_DNA"/>
</dbReference>
<dbReference type="RefSeq" id="WP_002209188.1">
    <property type="nucleotide sequence ID" value="NZ_ACNQ01000006.1"/>
</dbReference>
<dbReference type="SMR" id="Q1CN19"/>
<dbReference type="GeneID" id="57974202"/>
<dbReference type="KEGG" id="ypn:YPN_0278"/>
<dbReference type="HOGENOM" id="CLU_057069_1_0_6"/>
<dbReference type="Proteomes" id="UP000008936">
    <property type="component" value="Chromosome"/>
</dbReference>
<dbReference type="GO" id="GO:0005737">
    <property type="term" value="C:cytoplasm"/>
    <property type="evidence" value="ECO:0007669"/>
    <property type="project" value="UniProtKB-SubCell"/>
</dbReference>
<dbReference type="GO" id="GO:0016747">
    <property type="term" value="F:acyltransferase activity, transferring groups other than amino-acyl groups"/>
    <property type="evidence" value="ECO:0007669"/>
    <property type="project" value="UniProtKB-UniRule"/>
</dbReference>
<dbReference type="GO" id="GO:0004332">
    <property type="term" value="F:fructose-bisphosphate aldolase activity"/>
    <property type="evidence" value="ECO:0007669"/>
    <property type="project" value="InterPro"/>
</dbReference>
<dbReference type="CDD" id="cd00958">
    <property type="entry name" value="DhnA"/>
    <property type="match status" value="1"/>
</dbReference>
<dbReference type="Gene3D" id="3.20.20.70">
    <property type="entry name" value="Aldolase class I"/>
    <property type="match status" value="1"/>
</dbReference>
<dbReference type="HAMAP" id="MF_02052">
    <property type="entry name" value="LsrF"/>
    <property type="match status" value="1"/>
</dbReference>
<dbReference type="InterPro" id="IPR013785">
    <property type="entry name" value="Aldolase_TIM"/>
</dbReference>
<dbReference type="InterPro" id="IPR002915">
    <property type="entry name" value="DeoC/FbaB/LacD_aldolase"/>
</dbReference>
<dbReference type="InterPro" id="IPR050456">
    <property type="entry name" value="DeoC/FbaB_aldolase"/>
</dbReference>
<dbReference type="InterPro" id="IPR041720">
    <property type="entry name" value="FbaB-like"/>
</dbReference>
<dbReference type="InterPro" id="IPR033673">
    <property type="entry name" value="LsrF"/>
</dbReference>
<dbReference type="NCBIfam" id="NF006081">
    <property type="entry name" value="PRK08227.1"/>
    <property type="match status" value="1"/>
</dbReference>
<dbReference type="PANTHER" id="PTHR47916:SF1">
    <property type="entry name" value="3-HYDROXY-5-PHOSPHONOOXYPENTANE-2,4-DIONE THIOLASE"/>
    <property type="match status" value="1"/>
</dbReference>
<dbReference type="PANTHER" id="PTHR47916">
    <property type="entry name" value="FRUCTOSE-BISPHOSPHATE ALDOLASE CLASS 1"/>
    <property type="match status" value="1"/>
</dbReference>
<dbReference type="Pfam" id="PF01791">
    <property type="entry name" value="DeoC"/>
    <property type="match status" value="1"/>
</dbReference>
<dbReference type="PIRSF" id="PIRSF038992">
    <property type="entry name" value="Aldolase_Ia"/>
    <property type="match status" value="1"/>
</dbReference>
<dbReference type="SMART" id="SM01133">
    <property type="entry name" value="DeoC"/>
    <property type="match status" value="1"/>
</dbReference>
<dbReference type="SUPFAM" id="SSF51569">
    <property type="entry name" value="Aldolase"/>
    <property type="match status" value="1"/>
</dbReference>
<evidence type="ECO:0000255" key="1">
    <source>
        <dbReference type="HAMAP-Rule" id="MF_02052"/>
    </source>
</evidence>
<gene>
    <name evidence="1" type="primary">lsrF</name>
    <name type="ordered locus">YPN_0278</name>
    <name type="ORF">YP516_0275</name>
</gene>
<sequence>MADLDDIKDGKDFGIGIPQQNPAFTLKGSGSLDWGMQSRLARIFNPKTNRTVMLAFDHGYFQGPTTGLERIDINIAPLFEYADVLMCTRGILRSVVPAAANRPVVLRASGANSILTYLSNEAVAVAMEDAVRLNACAVAAQVYIGTEHEHQSIKNIIQLIDQGMRYGMPTMAVTGVGKDMVRDQRYFSLASRIAAEMGAQVIKTYYVDSGFERIAAGCPVPIVIAGGKKLPERDALEMCYQAIDQGASGVDMGRNIFQSDAPIAMLKAVHAIVHKNENAAAAYQLFLHEQN</sequence>